<evidence type="ECO:0000250" key="1"/>
<evidence type="ECO:0000305" key="2"/>
<reference key="1">
    <citation type="journal article" date="2011" name="PLoS Genet.">
        <title>Whole-genome comparison reveals novel genetic elements that characterize the genome of industrial strains of Saccharomyces cerevisiae.</title>
        <authorList>
            <person name="Borneman A.R."/>
            <person name="Desany B.A."/>
            <person name="Riches D."/>
            <person name="Affourtit J.P."/>
            <person name="Forgan A.H."/>
            <person name="Pretorius I.S."/>
            <person name="Egholm M."/>
            <person name="Chambers P.J."/>
        </authorList>
    </citation>
    <scope>NUCLEOTIDE SEQUENCE [LARGE SCALE GENOMIC DNA]</scope>
    <source>
        <strain>FostersO</strain>
    </source>
</reference>
<dbReference type="EMBL" id="AEEZ01000095">
    <property type="protein sequence ID" value="EGA60430.1"/>
    <property type="molecule type" value="Genomic_DNA"/>
</dbReference>
<dbReference type="HOGENOM" id="CLU_072105_0_0_1"/>
<dbReference type="OMA" id="EFTHRDE"/>
<dbReference type="OrthoDB" id="34738at4893"/>
<dbReference type="GO" id="GO:0005737">
    <property type="term" value="C:cytoplasm"/>
    <property type="evidence" value="ECO:0007669"/>
    <property type="project" value="UniProtKB-KW"/>
</dbReference>
<dbReference type="GO" id="GO:0005634">
    <property type="term" value="C:nucleus"/>
    <property type="evidence" value="ECO:0007669"/>
    <property type="project" value="UniProtKB-SubCell"/>
</dbReference>
<dbReference type="GO" id="GO:0000922">
    <property type="term" value="C:spindle pole"/>
    <property type="evidence" value="ECO:0007669"/>
    <property type="project" value="UniProtKB-SubCell"/>
</dbReference>
<dbReference type="GO" id="GO:0006260">
    <property type="term" value="P:DNA replication"/>
    <property type="evidence" value="ECO:0007669"/>
    <property type="project" value="UniProtKB-KW"/>
</dbReference>
<dbReference type="GO" id="GO:0030174">
    <property type="term" value="P:regulation of DNA-templated DNA replication initiation"/>
    <property type="evidence" value="ECO:0007669"/>
    <property type="project" value="InterPro"/>
</dbReference>
<dbReference type="InterPro" id="IPR016808">
    <property type="entry name" value="Sld7"/>
</dbReference>
<dbReference type="InterPro" id="IPR041260">
    <property type="entry name" value="Sld7_C"/>
</dbReference>
<dbReference type="InterPro" id="IPR041564">
    <property type="entry name" value="Sld7_N"/>
</dbReference>
<dbReference type="Pfam" id="PF18596">
    <property type="entry name" value="Sld7_C"/>
    <property type="match status" value="1"/>
</dbReference>
<dbReference type="Pfam" id="PF18636">
    <property type="entry name" value="Sld7_N"/>
    <property type="match status" value="1"/>
</dbReference>
<dbReference type="PIRSF" id="PIRSF022788">
    <property type="entry name" value="UCP022788"/>
    <property type="match status" value="1"/>
</dbReference>
<keyword id="KW-0131">Cell cycle</keyword>
<keyword id="KW-0963">Cytoplasm</keyword>
<keyword id="KW-0206">Cytoskeleton</keyword>
<keyword id="KW-0235">DNA replication</keyword>
<keyword id="KW-0539">Nucleus</keyword>
<name>SLD7_YEASO</name>
<accession>E7NND9</accession>
<organism>
    <name type="scientific">Saccharomyces cerevisiae (strain FostersO)</name>
    <name type="common">Baker's yeast</name>
    <dbReference type="NCBI Taxonomy" id="764101"/>
    <lineage>
        <taxon>Eukaryota</taxon>
        <taxon>Fungi</taxon>
        <taxon>Dikarya</taxon>
        <taxon>Ascomycota</taxon>
        <taxon>Saccharomycotina</taxon>
        <taxon>Saccharomycetes</taxon>
        <taxon>Saccharomycetales</taxon>
        <taxon>Saccharomycetaceae</taxon>
        <taxon>Saccharomyces</taxon>
    </lineage>
</organism>
<proteinExistence type="inferred from homology"/>
<gene>
    <name type="primary">SLD7</name>
    <name type="ORF">FOSTERSO_4495</name>
</gene>
<feature type="chain" id="PRO_0000411036" description="Mitochondrial morphogenesis protein SLD7">
    <location>
        <begin position="1"/>
        <end position="257"/>
    </location>
</feature>
<sequence>MSRKLCTLNFTLSGKQGSLVIRDIQLWSNRPTASKSTSEXRGQFIQYVDLAKLPLWVRSTNMNTYRCYSTSATAQAYFKSKLRNANRGIVIELXDKVDQRSQEPAYLIIFRENTELNCFQVDLTMKHEFDGQVTKLKQDIGKTRASVSKEGSIDIIIQQXQQRKIGTKTKVYRNVHINDKRLQFNETLSKLILGGLRLRGISNSITDYQKLYKITFDAAEFTHRDELKRISMGSGEEVSFESLQETVETLLKLFTKS</sequence>
<protein>
    <recommendedName>
        <fullName>Mitochondrial morphogenesis protein SLD7</fullName>
    </recommendedName>
    <alternativeName>
        <fullName>Synthetic lethality with DPB11-24 mutation protein 7</fullName>
    </alternativeName>
</protein>
<comment type="function">
    <text evidence="1">Required for the proper function of SLD3 at the initiation of DNA replication. Binds to SLD3 and reduces its affinity for CDC45, a component of the replication fork. Required for mitochondrial morphology (By similarity).</text>
</comment>
<comment type="subunit">
    <text evidence="1">Interacts with SLD3.</text>
</comment>
<comment type="subcellular location">
    <subcellularLocation>
        <location evidence="1">Nucleus</location>
    </subcellularLocation>
    <subcellularLocation>
        <location evidence="1">Cytoplasm</location>
        <location evidence="1">Cytoskeleton</location>
        <location evidence="1">Spindle pole</location>
    </subcellularLocation>
</comment>
<comment type="similarity">
    <text evidence="2">Belongs to the SLD7 family.</text>
</comment>